<reference key="1">
    <citation type="journal article" date="2009" name="J. Bacteriol.">
        <title>Genome sequences of three Agrobacterium biovars help elucidate the evolution of multichromosome genomes in bacteria.</title>
        <authorList>
            <person name="Slater S.C."/>
            <person name="Goldman B.S."/>
            <person name="Goodner B."/>
            <person name="Setubal J.C."/>
            <person name="Farrand S.K."/>
            <person name="Nester E.W."/>
            <person name="Burr T.J."/>
            <person name="Banta L."/>
            <person name="Dickerman A.W."/>
            <person name="Paulsen I."/>
            <person name="Otten L."/>
            <person name="Suen G."/>
            <person name="Welch R."/>
            <person name="Almeida N.F."/>
            <person name="Arnold F."/>
            <person name="Burton O.T."/>
            <person name="Du Z."/>
            <person name="Ewing A."/>
            <person name="Godsy E."/>
            <person name="Heisel S."/>
            <person name="Houmiel K.L."/>
            <person name="Jhaveri J."/>
            <person name="Lu J."/>
            <person name="Miller N.M."/>
            <person name="Norton S."/>
            <person name="Chen Q."/>
            <person name="Phoolcharoen W."/>
            <person name="Ohlin V."/>
            <person name="Ondrusek D."/>
            <person name="Pride N."/>
            <person name="Stricklin S.L."/>
            <person name="Sun J."/>
            <person name="Wheeler C."/>
            <person name="Wilson L."/>
            <person name="Zhu H."/>
            <person name="Wood D.W."/>
        </authorList>
    </citation>
    <scope>NUCLEOTIDE SEQUENCE [LARGE SCALE GENOMIC DNA]</scope>
    <source>
        <strain>K84 / ATCC BAA-868</strain>
    </source>
</reference>
<proteinExistence type="inferred from homology"/>
<keyword id="KW-0963">Cytoplasm</keyword>
<keyword id="KW-0378">Hydrolase</keyword>
<keyword id="KW-0540">Nuclease</keyword>
<keyword id="KW-0690">Ribosome biogenesis</keyword>
<name>YQGF_RHIR8</name>
<comment type="function">
    <text evidence="1">Could be a nuclease involved in processing of the 5'-end of pre-16S rRNA.</text>
</comment>
<comment type="subcellular location">
    <subcellularLocation>
        <location evidence="1">Cytoplasm</location>
    </subcellularLocation>
</comment>
<comment type="similarity">
    <text evidence="1">Belongs to the YqgF nuclease family.</text>
</comment>
<protein>
    <recommendedName>
        <fullName evidence="1">Putative pre-16S rRNA nuclease</fullName>
        <ecNumber evidence="1">3.1.-.-</ecNumber>
    </recommendedName>
</protein>
<gene>
    <name type="ordered locus">Arad_1906</name>
</gene>
<feature type="chain" id="PRO_1000147455" description="Putative pre-16S rRNA nuclease">
    <location>
        <begin position="1"/>
        <end position="164"/>
    </location>
</feature>
<accession>B9JDM7</accession>
<organism>
    <name type="scientific">Rhizobium rhizogenes (strain K84 / ATCC BAA-868)</name>
    <name type="common">Agrobacterium radiobacter</name>
    <dbReference type="NCBI Taxonomy" id="311403"/>
    <lineage>
        <taxon>Bacteria</taxon>
        <taxon>Pseudomonadati</taxon>
        <taxon>Pseudomonadota</taxon>
        <taxon>Alphaproteobacteria</taxon>
        <taxon>Hyphomicrobiales</taxon>
        <taxon>Rhizobiaceae</taxon>
        <taxon>Rhizobium/Agrobacterium group</taxon>
        <taxon>Rhizobium</taxon>
    </lineage>
</organism>
<dbReference type="EC" id="3.1.-.-" evidence="1"/>
<dbReference type="EMBL" id="CP000628">
    <property type="protein sequence ID" value="ACM26228.1"/>
    <property type="molecule type" value="Genomic_DNA"/>
</dbReference>
<dbReference type="SMR" id="B9JDM7"/>
<dbReference type="STRING" id="311403.Arad_1906"/>
<dbReference type="KEGG" id="ara:Arad_1906"/>
<dbReference type="eggNOG" id="COG0816">
    <property type="taxonomic scope" value="Bacteria"/>
</dbReference>
<dbReference type="HOGENOM" id="CLU_098240_1_1_5"/>
<dbReference type="Proteomes" id="UP000001600">
    <property type="component" value="Chromosome 1"/>
</dbReference>
<dbReference type="GO" id="GO:0005829">
    <property type="term" value="C:cytosol"/>
    <property type="evidence" value="ECO:0007669"/>
    <property type="project" value="TreeGrafter"/>
</dbReference>
<dbReference type="GO" id="GO:0004518">
    <property type="term" value="F:nuclease activity"/>
    <property type="evidence" value="ECO:0007669"/>
    <property type="project" value="UniProtKB-KW"/>
</dbReference>
<dbReference type="GO" id="GO:0000967">
    <property type="term" value="P:rRNA 5'-end processing"/>
    <property type="evidence" value="ECO:0007669"/>
    <property type="project" value="UniProtKB-UniRule"/>
</dbReference>
<dbReference type="CDD" id="cd16964">
    <property type="entry name" value="YqgF"/>
    <property type="match status" value="1"/>
</dbReference>
<dbReference type="Gene3D" id="3.30.420.140">
    <property type="entry name" value="YqgF/RNase H-like domain"/>
    <property type="match status" value="1"/>
</dbReference>
<dbReference type="HAMAP" id="MF_00651">
    <property type="entry name" value="Nuclease_YqgF"/>
    <property type="match status" value="1"/>
</dbReference>
<dbReference type="InterPro" id="IPR012337">
    <property type="entry name" value="RNaseH-like_sf"/>
</dbReference>
<dbReference type="InterPro" id="IPR005227">
    <property type="entry name" value="YqgF"/>
</dbReference>
<dbReference type="InterPro" id="IPR006641">
    <property type="entry name" value="YqgF/RNaseH-like_dom"/>
</dbReference>
<dbReference type="InterPro" id="IPR037027">
    <property type="entry name" value="YqgF/RNaseH-like_dom_sf"/>
</dbReference>
<dbReference type="NCBIfam" id="TIGR00250">
    <property type="entry name" value="RNAse_H_YqgF"/>
    <property type="match status" value="1"/>
</dbReference>
<dbReference type="PANTHER" id="PTHR33317">
    <property type="entry name" value="POLYNUCLEOTIDYL TRANSFERASE, RIBONUCLEASE H-LIKE SUPERFAMILY PROTEIN"/>
    <property type="match status" value="1"/>
</dbReference>
<dbReference type="PANTHER" id="PTHR33317:SF4">
    <property type="entry name" value="POLYNUCLEOTIDYL TRANSFERASE, RIBONUCLEASE H-LIKE SUPERFAMILY PROTEIN"/>
    <property type="match status" value="1"/>
</dbReference>
<dbReference type="Pfam" id="PF03652">
    <property type="entry name" value="RuvX"/>
    <property type="match status" value="1"/>
</dbReference>
<dbReference type="SMART" id="SM00732">
    <property type="entry name" value="YqgFc"/>
    <property type="match status" value="1"/>
</dbReference>
<dbReference type="SUPFAM" id="SSF53098">
    <property type="entry name" value="Ribonuclease H-like"/>
    <property type="match status" value="1"/>
</dbReference>
<evidence type="ECO:0000255" key="1">
    <source>
        <dbReference type="HAMAP-Rule" id="MF_00651"/>
    </source>
</evidence>
<sequence>MTTLTIEDLAVMLLPGQAIAGLDLGTKTIGLAMSDLGRRFATPRPVIKRVKFTQDAQTLLAFAEKEKVAAFVIGLPMNMDGSTGPRVQATRAFVRSMADKTALPFVYWDERLSTVAAERALLEMDVSRAKRAERIDSAAASFILQGALDRLSALGRPAFPDLDS</sequence>